<feature type="chain" id="PRO_0000075445" description="Putative transposase for insertion sequence element IS986/IS6110">
    <location>
        <begin position="1"/>
        <end position="278"/>
    </location>
</feature>
<feature type="domain" description="Integrase catalytic" evidence="2">
    <location>
        <begin position="101"/>
        <end position="268"/>
    </location>
</feature>
<protein>
    <recommendedName>
        <fullName>Putative transposase for insertion sequence element IS986/IS6110</fullName>
    </recommendedName>
</protein>
<keyword id="KW-0233">DNA recombination</keyword>
<keyword id="KW-0238">DNA-binding</keyword>
<keyword id="KW-1185">Reference proteome</keyword>
<keyword id="KW-0814">Transposable element</keyword>
<keyword id="KW-0815">Transposition</keyword>
<name>TRA9_MYCBO</name>
<proteinExistence type="inferred from homology"/>
<dbReference type="EMBL" id="LT708304">
    <property type="protein sequence ID" value="SIU01457.1"/>
    <property type="molecule type" value="Genomic_DNA"/>
</dbReference>
<dbReference type="RefSeq" id="NP_856483.1">
    <property type="nucleotide sequence ID" value="NC_002945.3"/>
</dbReference>
<dbReference type="SMR" id="P59800"/>
<dbReference type="KEGG" id="mbo:BQ2027_MB2838C"/>
<dbReference type="PATRIC" id="fig|233413.5.peg.3113"/>
<dbReference type="Proteomes" id="UP000001419">
    <property type="component" value="Chromosome"/>
</dbReference>
<dbReference type="GO" id="GO:0003677">
    <property type="term" value="F:DNA binding"/>
    <property type="evidence" value="ECO:0007669"/>
    <property type="project" value="UniProtKB-KW"/>
</dbReference>
<dbReference type="GO" id="GO:0015074">
    <property type="term" value="P:DNA integration"/>
    <property type="evidence" value="ECO:0007669"/>
    <property type="project" value="InterPro"/>
</dbReference>
<dbReference type="GO" id="GO:0006310">
    <property type="term" value="P:DNA recombination"/>
    <property type="evidence" value="ECO:0007669"/>
    <property type="project" value="UniProtKB-KW"/>
</dbReference>
<dbReference type="GO" id="GO:0032196">
    <property type="term" value="P:transposition"/>
    <property type="evidence" value="ECO:0007669"/>
    <property type="project" value="UniProtKB-KW"/>
</dbReference>
<dbReference type="FunFam" id="3.30.420.10:FF:000111">
    <property type="entry name" value="IS3-like element IS987 family transposase"/>
    <property type="match status" value="1"/>
</dbReference>
<dbReference type="Gene3D" id="3.30.420.10">
    <property type="entry name" value="Ribonuclease H-like superfamily/Ribonuclease H"/>
    <property type="match status" value="1"/>
</dbReference>
<dbReference type="InterPro" id="IPR025948">
    <property type="entry name" value="HTH-like_dom"/>
</dbReference>
<dbReference type="InterPro" id="IPR001584">
    <property type="entry name" value="Integrase_cat-core"/>
</dbReference>
<dbReference type="InterPro" id="IPR012337">
    <property type="entry name" value="RNaseH-like_sf"/>
</dbReference>
<dbReference type="InterPro" id="IPR036397">
    <property type="entry name" value="RNaseH_sf"/>
</dbReference>
<dbReference type="InterPro" id="IPR048020">
    <property type="entry name" value="Transpos_IS3"/>
</dbReference>
<dbReference type="InterPro" id="IPR050900">
    <property type="entry name" value="Transposase_IS3/IS150/IS904"/>
</dbReference>
<dbReference type="NCBIfam" id="NF033516">
    <property type="entry name" value="transpos_IS3"/>
    <property type="match status" value="1"/>
</dbReference>
<dbReference type="PANTHER" id="PTHR46889">
    <property type="entry name" value="TRANSPOSASE INSF FOR INSERTION SEQUENCE IS3B-RELATED"/>
    <property type="match status" value="1"/>
</dbReference>
<dbReference type="PANTHER" id="PTHR46889:SF4">
    <property type="entry name" value="TRANSPOSASE INSO FOR INSERTION SEQUENCE ELEMENT IS911B-RELATED"/>
    <property type="match status" value="1"/>
</dbReference>
<dbReference type="Pfam" id="PF13276">
    <property type="entry name" value="HTH_21"/>
    <property type="match status" value="1"/>
</dbReference>
<dbReference type="Pfam" id="PF00665">
    <property type="entry name" value="rve"/>
    <property type="match status" value="1"/>
</dbReference>
<dbReference type="SUPFAM" id="SSF53098">
    <property type="entry name" value="Ribonuclease H-like"/>
    <property type="match status" value="1"/>
</dbReference>
<dbReference type="PROSITE" id="PS50994">
    <property type="entry name" value="INTEGRASE"/>
    <property type="match status" value="1"/>
</dbReference>
<comment type="function">
    <text evidence="1">Involved in the transposition of the insertion sequence.</text>
</comment>
<accession>P59800</accession>
<accession>A0A1R3Y2F7</accession>
<accession>X2BLY7</accession>
<gene>
    <name type="ordered locus">BQ2027_MB2838C</name>
</gene>
<reference key="1">
    <citation type="journal article" date="2003" name="Proc. Natl. Acad. Sci. U.S.A.">
        <title>The complete genome sequence of Mycobacterium bovis.</title>
        <authorList>
            <person name="Garnier T."/>
            <person name="Eiglmeier K."/>
            <person name="Camus J.-C."/>
            <person name="Medina N."/>
            <person name="Mansoor H."/>
            <person name="Pryor M."/>
            <person name="Duthoy S."/>
            <person name="Grondin S."/>
            <person name="Lacroix C."/>
            <person name="Monsempe C."/>
            <person name="Simon S."/>
            <person name="Harris B."/>
            <person name="Atkin R."/>
            <person name="Doggett J."/>
            <person name="Mayes R."/>
            <person name="Keating L."/>
            <person name="Wheeler P.R."/>
            <person name="Parkhill J."/>
            <person name="Barrell B.G."/>
            <person name="Cole S.T."/>
            <person name="Gordon S.V."/>
            <person name="Hewinson R.G."/>
        </authorList>
    </citation>
    <scope>NUCLEOTIDE SEQUENCE [LARGE SCALE GENOMIC DNA]</scope>
    <source>
        <strain>ATCC BAA-935 / AF2122/97</strain>
    </source>
</reference>
<reference key="2">
    <citation type="journal article" date="2017" name="Genome Announc.">
        <title>Updated reference genome sequence and annotation of Mycobacterium bovis AF2122/97.</title>
        <authorList>
            <person name="Malone K.M."/>
            <person name="Farrell D."/>
            <person name="Stuber T.P."/>
            <person name="Schubert O.T."/>
            <person name="Aebersold R."/>
            <person name="Robbe-Austerman S."/>
            <person name="Gordon S.V."/>
        </authorList>
    </citation>
    <scope>NUCLEOTIDE SEQUENCE [LARGE SCALE GENOMIC DNA]</scope>
    <scope>GENOME REANNOTATION</scope>
    <source>
        <strain>ATCC BAA-935 / AF2122/97</strain>
    </source>
</reference>
<sequence length="278" mass="31369">MPIAPSTYYDHINREPSRRELRDGELKEHISRVHAANYGVYGARKVWLTLNREGIEVARCTVERLMTKLGLSGTTRGKARRTTIADPATARPADLVQRRFGPPAPNRLWVADLTYVSTWAGFAYVAFVTDAYARRILGWRVASTMATSMVLDAIEQAIWTRQQEGVLDLKDVIHHTDRGSQYTSIRFSERLAEAGIQPSVGAVGSSYDNALAETINGLYKTELIKPGKPWRSIEDVELATARWVDWFNHRRLYQYCGDVPPVELEAAYYAQRQRPAAG</sequence>
<organism>
    <name type="scientific">Mycobacterium bovis (strain ATCC BAA-935 / AF2122/97)</name>
    <dbReference type="NCBI Taxonomy" id="233413"/>
    <lineage>
        <taxon>Bacteria</taxon>
        <taxon>Bacillati</taxon>
        <taxon>Actinomycetota</taxon>
        <taxon>Actinomycetes</taxon>
        <taxon>Mycobacteriales</taxon>
        <taxon>Mycobacteriaceae</taxon>
        <taxon>Mycobacterium</taxon>
        <taxon>Mycobacterium tuberculosis complex</taxon>
    </lineage>
</organism>
<evidence type="ECO:0000250" key="1"/>
<evidence type="ECO:0000255" key="2">
    <source>
        <dbReference type="PROSITE-ProRule" id="PRU00457"/>
    </source>
</evidence>